<geneLocation type="mitochondrion"/>
<dbReference type="EC" id="7.1.1.2"/>
<dbReference type="EMBL" id="AB073301">
    <property type="protein sequence ID" value="BAC57500.1"/>
    <property type="molecule type" value="Genomic_DNA"/>
</dbReference>
<dbReference type="RefSeq" id="NP_789747.1">
    <property type="nucleotide sequence ID" value="NC_004575.1"/>
</dbReference>
<dbReference type="SMR" id="Q85UK4"/>
<dbReference type="GeneID" id="806620"/>
<dbReference type="CTD" id="4535"/>
<dbReference type="GO" id="GO:0005743">
    <property type="term" value="C:mitochondrial inner membrane"/>
    <property type="evidence" value="ECO:0007669"/>
    <property type="project" value="UniProtKB-SubCell"/>
</dbReference>
<dbReference type="GO" id="GO:0008137">
    <property type="term" value="F:NADH dehydrogenase (ubiquinone) activity"/>
    <property type="evidence" value="ECO:0007669"/>
    <property type="project" value="UniProtKB-EC"/>
</dbReference>
<dbReference type="GO" id="GO:0009060">
    <property type="term" value="P:aerobic respiration"/>
    <property type="evidence" value="ECO:0007669"/>
    <property type="project" value="TreeGrafter"/>
</dbReference>
<dbReference type="HAMAP" id="MF_01350">
    <property type="entry name" value="NDH1_NuoH"/>
    <property type="match status" value="1"/>
</dbReference>
<dbReference type="InterPro" id="IPR001694">
    <property type="entry name" value="NADH_UbQ_OxRdtase_su1/FPO"/>
</dbReference>
<dbReference type="InterPro" id="IPR018086">
    <property type="entry name" value="NADH_UbQ_OxRdtase_su1_CS"/>
</dbReference>
<dbReference type="PANTHER" id="PTHR11432">
    <property type="entry name" value="NADH DEHYDROGENASE SUBUNIT 1"/>
    <property type="match status" value="1"/>
</dbReference>
<dbReference type="PANTHER" id="PTHR11432:SF3">
    <property type="entry name" value="NADH-UBIQUINONE OXIDOREDUCTASE CHAIN 1"/>
    <property type="match status" value="1"/>
</dbReference>
<dbReference type="Pfam" id="PF00146">
    <property type="entry name" value="NADHdh"/>
    <property type="match status" value="1"/>
</dbReference>
<dbReference type="PROSITE" id="PS00667">
    <property type="entry name" value="COMPLEX1_ND1_1"/>
    <property type="match status" value="1"/>
</dbReference>
<dbReference type="PROSITE" id="PS00668">
    <property type="entry name" value="COMPLEX1_ND1_2"/>
    <property type="match status" value="1"/>
</dbReference>
<keyword id="KW-0249">Electron transport</keyword>
<keyword id="KW-0472">Membrane</keyword>
<keyword id="KW-0496">Mitochondrion</keyword>
<keyword id="KW-0999">Mitochondrion inner membrane</keyword>
<keyword id="KW-0520">NAD</keyword>
<keyword id="KW-0679">Respiratory chain</keyword>
<keyword id="KW-1278">Translocase</keyword>
<keyword id="KW-0812">Transmembrane</keyword>
<keyword id="KW-1133">Transmembrane helix</keyword>
<keyword id="KW-0813">Transport</keyword>
<keyword id="KW-0830">Ubiquinone</keyword>
<accession>Q85UK4</accession>
<protein>
    <recommendedName>
        <fullName>NADH-ubiquinone oxidoreductase chain 1</fullName>
        <ecNumber>7.1.1.2</ecNumber>
    </recommendedName>
    <alternativeName>
        <fullName>NADH dehydrogenase subunit 1</fullName>
    </alternativeName>
</protein>
<organism>
    <name type="scientific">Excalfactoria chinensis</name>
    <name type="common">Blue-breasted quail</name>
    <name type="synonym">Coturnix chinensis</name>
    <dbReference type="NCBI Taxonomy" id="46218"/>
    <lineage>
        <taxon>Eukaryota</taxon>
        <taxon>Metazoa</taxon>
        <taxon>Chordata</taxon>
        <taxon>Craniata</taxon>
        <taxon>Vertebrata</taxon>
        <taxon>Euteleostomi</taxon>
        <taxon>Archelosauria</taxon>
        <taxon>Archosauria</taxon>
        <taxon>Dinosauria</taxon>
        <taxon>Saurischia</taxon>
        <taxon>Theropoda</taxon>
        <taxon>Coelurosauria</taxon>
        <taxon>Aves</taxon>
        <taxon>Neognathae</taxon>
        <taxon>Galloanserae</taxon>
        <taxon>Galliformes</taxon>
        <taxon>Phasianidae</taxon>
        <taxon>Excalfactoria</taxon>
    </lineage>
</organism>
<sequence>MTPLTLMNLMIMTLSYIIPILIAVAFLTLVERKILSYMQARKGPNIVGPFGLLQPIADGVKLFIKEPIRPSTSSPFLFIMTPILALLLALTIWIPLPLPFPMADLNLGLLFLLAMSSLTVYSLLWSGWASNSKYALIGALRAVAQTISYEVTLAIILLSTIMLSGNYTLSTLSITQEPIYLIFSSWPLAMMWYISTLAETNRAPFDLTEGESELVSGFNVEYAAGPFALFFLAEYANIMLMNTLTITLFLNPSFLNLPSELFSITLATKVLLLSSSFLWVRASYPRFRYDQLMHLLWKNFLPLTLALCLWHTSMPISYAGLPPA</sequence>
<proteinExistence type="inferred from homology"/>
<feature type="chain" id="PRO_0000117372" description="NADH-ubiquinone oxidoreductase chain 1">
    <location>
        <begin position="1"/>
        <end position="324"/>
    </location>
</feature>
<feature type="transmembrane region" description="Helical" evidence="2">
    <location>
        <begin position="10"/>
        <end position="30"/>
    </location>
</feature>
<feature type="transmembrane region" description="Helical" evidence="2">
    <location>
        <begin position="76"/>
        <end position="96"/>
    </location>
</feature>
<feature type="transmembrane region" description="Helical" evidence="2">
    <location>
        <begin position="107"/>
        <end position="127"/>
    </location>
</feature>
<feature type="transmembrane region" description="Helical" evidence="2">
    <location>
        <begin position="143"/>
        <end position="163"/>
    </location>
</feature>
<feature type="transmembrane region" description="Helical" evidence="2">
    <location>
        <begin position="178"/>
        <end position="198"/>
    </location>
</feature>
<feature type="transmembrane region" description="Helical" evidence="2">
    <location>
        <begin position="229"/>
        <end position="249"/>
    </location>
</feature>
<feature type="transmembrane region" description="Helical" evidence="2">
    <location>
        <begin position="260"/>
        <end position="280"/>
    </location>
</feature>
<feature type="transmembrane region" description="Helical" evidence="2">
    <location>
        <begin position="300"/>
        <end position="320"/>
    </location>
</feature>
<evidence type="ECO:0000250" key="1"/>
<evidence type="ECO:0000255" key="2"/>
<evidence type="ECO:0000305" key="3"/>
<name>NU1M_EXCCH</name>
<comment type="function">
    <text evidence="1">Core subunit of the mitochondrial membrane respiratory chain NADH dehydrogenase (Complex I) that is believed to belong to the minimal assembly required for catalysis. Complex I functions in the transfer of electrons from NADH to the respiratory chain. The immediate electron acceptor for the enzyme is believed to be ubiquinone (By similarity).</text>
</comment>
<comment type="catalytic activity">
    <reaction>
        <text>a ubiquinone + NADH + 5 H(+)(in) = a ubiquinol + NAD(+) + 4 H(+)(out)</text>
        <dbReference type="Rhea" id="RHEA:29091"/>
        <dbReference type="Rhea" id="RHEA-COMP:9565"/>
        <dbReference type="Rhea" id="RHEA-COMP:9566"/>
        <dbReference type="ChEBI" id="CHEBI:15378"/>
        <dbReference type="ChEBI" id="CHEBI:16389"/>
        <dbReference type="ChEBI" id="CHEBI:17976"/>
        <dbReference type="ChEBI" id="CHEBI:57540"/>
        <dbReference type="ChEBI" id="CHEBI:57945"/>
        <dbReference type="EC" id="7.1.1.2"/>
    </reaction>
</comment>
<comment type="subcellular location">
    <subcellularLocation>
        <location evidence="1">Mitochondrion inner membrane</location>
        <topology evidence="1">Multi-pass membrane protein</topology>
    </subcellularLocation>
</comment>
<comment type="similarity">
    <text evidence="3">Belongs to the complex I subunit 1 family.</text>
</comment>
<gene>
    <name type="primary">MT-ND1</name>
    <name type="synonym">MTND1</name>
    <name type="synonym">NADH1</name>
    <name type="synonym">ND1</name>
</gene>
<reference key="1">
    <citation type="submission" date="2001-10" db="EMBL/GenBank/DDBJ databases">
        <title>Blue-breasted quail complete mitochondrial genome.</title>
        <authorList>
            <person name="Nishibori M."/>
            <person name="Tsudzuki M."/>
            <person name="Hayashi T."/>
            <person name="Yamamoto Y."/>
            <person name="Yasue H."/>
        </authorList>
    </citation>
    <scope>NUCLEOTIDE SEQUENCE [GENOMIC DNA]</scope>
    <source>
        <tissue>Liver</tissue>
    </source>
</reference>